<gene>
    <name evidence="1" type="primary">glmM</name>
    <name type="ordered locus">Ssed_3394</name>
</gene>
<dbReference type="EC" id="5.4.2.10" evidence="1"/>
<dbReference type="EMBL" id="CP000821">
    <property type="protein sequence ID" value="ABV37998.1"/>
    <property type="molecule type" value="Genomic_DNA"/>
</dbReference>
<dbReference type="SMR" id="A8FYS5"/>
<dbReference type="STRING" id="425104.Ssed_3394"/>
<dbReference type="KEGG" id="sse:Ssed_3394"/>
<dbReference type="eggNOG" id="COG1109">
    <property type="taxonomic scope" value="Bacteria"/>
</dbReference>
<dbReference type="HOGENOM" id="CLU_016950_7_0_6"/>
<dbReference type="Proteomes" id="UP000002015">
    <property type="component" value="Chromosome"/>
</dbReference>
<dbReference type="GO" id="GO:0005829">
    <property type="term" value="C:cytosol"/>
    <property type="evidence" value="ECO:0007669"/>
    <property type="project" value="TreeGrafter"/>
</dbReference>
<dbReference type="GO" id="GO:0000287">
    <property type="term" value="F:magnesium ion binding"/>
    <property type="evidence" value="ECO:0007669"/>
    <property type="project" value="UniProtKB-UniRule"/>
</dbReference>
<dbReference type="GO" id="GO:0008966">
    <property type="term" value="F:phosphoglucosamine mutase activity"/>
    <property type="evidence" value="ECO:0007669"/>
    <property type="project" value="UniProtKB-UniRule"/>
</dbReference>
<dbReference type="GO" id="GO:0004615">
    <property type="term" value="F:phosphomannomutase activity"/>
    <property type="evidence" value="ECO:0007669"/>
    <property type="project" value="TreeGrafter"/>
</dbReference>
<dbReference type="GO" id="GO:0005975">
    <property type="term" value="P:carbohydrate metabolic process"/>
    <property type="evidence" value="ECO:0007669"/>
    <property type="project" value="InterPro"/>
</dbReference>
<dbReference type="GO" id="GO:0009252">
    <property type="term" value="P:peptidoglycan biosynthetic process"/>
    <property type="evidence" value="ECO:0007669"/>
    <property type="project" value="TreeGrafter"/>
</dbReference>
<dbReference type="GO" id="GO:0006048">
    <property type="term" value="P:UDP-N-acetylglucosamine biosynthetic process"/>
    <property type="evidence" value="ECO:0007669"/>
    <property type="project" value="TreeGrafter"/>
</dbReference>
<dbReference type="CDD" id="cd05802">
    <property type="entry name" value="GlmM"/>
    <property type="match status" value="1"/>
</dbReference>
<dbReference type="FunFam" id="3.30.310.50:FF:000001">
    <property type="entry name" value="Phosphoglucosamine mutase"/>
    <property type="match status" value="1"/>
</dbReference>
<dbReference type="FunFam" id="3.40.120.10:FF:000001">
    <property type="entry name" value="Phosphoglucosamine mutase"/>
    <property type="match status" value="1"/>
</dbReference>
<dbReference type="FunFam" id="3.40.120.10:FF:000003">
    <property type="entry name" value="Phosphoglucosamine mutase"/>
    <property type="match status" value="1"/>
</dbReference>
<dbReference type="Gene3D" id="3.40.120.10">
    <property type="entry name" value="Alpha-D-Glucose-1,6-Bisphosphate, subunit A, domain 3"/>
    <property type="match status" value="3"/>
</dbReference>
<dbReference type="Gene3D" id="3.30.310.50">
    <property type="entry name" value="Alpha-D-phosphohexomutase, C-terminal domain"/>
    <property type="match status" value="1"/>
</dbReference>
<dbReference type="HAMAP" id="MF_01554_B">
    <property type="entry name" value="GlmM_B"/>
    <property type="match status" value="1"/>
</dbReference>
<dbReference type="InterPro" id="IPR005844">
    <property type="entry name" value="A-D-PHexomutase_a/b/a-I"/>
</dbReference>
<dbReference type="InterPro" id="IPR016055">
    <property type="entry name" value="A-D-PHexomutase_a/b/a-I/II/III"/>
</dbReference>
<dbReference type="InterPro" id="IPR005845">
    <property type="entry name" value="A-D-PHexomutase_a/b/a-II"/>
</dbReference>
<dbReference type="InterPro" id="IPR005846">
    <property type="entry name" value="A-D-PHexomutase_a/b/a-III"/>
</dbReference>
<dbReference type="InterPro" id="IPR005843">
    <property type="entry name" value="A-D-PHexomutase_C"/>
</dbReference>
<dbReference type="InterPro" id="IPR036900">
    <property type="entry name" value="A-D-PHexomutase_C_sf"/>
</dbReference>
<dbReference type="InterPro" id="IPR016066">
    <property type="entry name" value="A-D-PHexomutase_CS"/>
</dbReference>
<dbReference type="InterPro" id="IPR005841">
    <property type="entry name" value="Alpha-D-phosphohexomutase_SF"/>
</dbReference>
<dbReference type="InterPro" id="IPR006352">
    <property type="entry name" value="GlmM_bact"/>
</dbReference>
<dbReference type="InterPro" id="IPR050060">
    <property type="entry name" value="Phosphoglucosamine_mutase"/>
</dbReference>
<dbReference type="NCBIfam" id="TIGR01455">
    <property type="entry name" value="glmM"/>
    <property type="match status" value="1"/>
</dbReference>
<dbReference type="NCBIfam" id="NF008139">
    <property type="entry name" value="PRK10887.1"/>
    <property type="match status" value="1"/>
</dbReference>
<dbReference type="PANTHER" id="PTHR42946:SF1">
    <property type="entry name" value="PHOSPHOGLUCOMUTASE (ALPHA-D-GLUCOSE-1,6-BISPHOSPHATE-DEPENDENT)"/>
    <property type="match status" value="1"/>
</dbReference>
<dbReference type="PANTHER" id="PTHR42946">
    <property type="entry name" value="PHOSPHOHEXOSE MUTASE"/>
    <property type="match status" value="1"/>
</dbReference>
<dbReference type="Pfam" id="PF02878">
    <property type="entry name" value="PGM_PMM_I"/>
    <property type="match status" value="1"/>
</dbReference>
<dbReference type="Pfam" id="PF02879">
    <property type="entry name" value="PGM_PMM_II"/>
    <property type="match status" value="1"/>
</dbReference>
<dbReference type="Pfam" id="PF02880">
    <property type="entry name" value="PGM_PMM_III"/>
    <property type="match status" value="1"/>
</dbReference>
<dbReference type="Pfam" id="PF00408">
    <property type="entry name" value="PGM_PMM_IV"/>
    <property type="match status" value="1"/>
</dbReference>
<dbReference type="PRINTS" id="PR00509">
    <property type="entry name" value="PGMPMM"/>
</dbReference>
<dbReference type="SUPFAM" id="SSF55957">
    <property type="entry name" value="Phosphoglucomutase, C-terminal domain"/>
    <property type="match status" value="1"/>
</dbReference>
<dbReference type="SUPFAM" id="SSF53738">
    <property type="entry name" value="Phosphoglucomutase, first 3 domains"/>
    <property type="match status" value="3"/>
</dbReference>
<dbReference type="PROSITE" id="PS00710">
    <property type="entry name" value="PGM_PMM"/>
    <property type="match status" value="1"/>
</dbReference>
<proteinExistence type="inferred from homology"/>
<reference key="1">
    <citation type="submission" date="2007-08" db="EMBL/GenBank/DDBJ databases">
        <title>Complete sequence of Shewanella sediminis HAW-EB3.</title>
        <authorList>
            <consortium name="US DOE Joint Genome Institute"/>
            <person name="Copeland A."/>
            <person name="Lucas S."/>
            <person name="Lapidus A."/>
            <person name="Barry K."/>
            <person name="Glavina del Rio T."/>
            <person name="Dalin E."/>
            <person name="Tice H."/>
            <person name="Pitluck S."/>
            <person name="Chertkov O."/>
            <person name="Brettin T."/>
            <person name="Bruce D."/>
            <person name="Detter J.C."/>
            <person name="Han C."/>
            <person name="Schmutz J."/>
            <person name="Larimer F."/>
            <person name="Land M."/>
            <person name="Hauser L."/>
            <person name="Kyrpides N."/>
            <person name="Kim E."/>
            <person name="Zhao J.-S."/>
            <person name="Richardson P."/>
        </authorList>
    </citation>
    <scope>NUCLEOTIDE SEQUENCE [LARGE SCALE GENOMIC DNA]</scope>
    <source>
        <strain>HAW-EB3</strain>
    </source>
</reference>
<organism>
    <name type="scientific">Shewanella sediminis (strain HAW-EB3)</name>
    <dbReference type="NCBI Taxonomy" id="425104"/>
    <lineage>
        <taxon>Bacteria</taxon>
        <taxon>Pseudomonadati</taxon>
        <taxon>Pseudomonadota</taxon>
        <taxon>Gammaproteobacteria</taxon>
        <taxon>Alteromonadales</taxon>
        <taxon>Shewanellaceae</taxon>
        <taxon>Shewanella</taxon>
    </lineage>
</organism>
<comment type="function">
    <text evidence="1">Catalyzes the conversion of glucosamine-6-phosphate to glucosamine-1-phosphate.</text>
</comment>
<comment type="catalytic activity">
    <reaction evidence="1">
        <text>alpha-D-glucosamine 1-phosphate = D-glucosamine 6-phosphate</text>
        <dbReference type="Rhea" id="RHEA:23424"/>
        <dbReference type="ChEBI" id="CHEBI:58516"/>
        <dbReference type="ChEBI" id="CHEBI:58725"/>
        <dbReference type="EC" id="5.4.2.10"/>
    </reaction>
</comment>
<comment type="cofactor">
    <cofactor evidence="1">
        <name>Mg(2+)</name>
        <dbReference type="ChEBI" id="CHEBI:18420"/>
    </cofactor>
    <text evidence="1">Binds 1 Mg(2+) ion per subunit.</text>
</comment>
<comment type="PTM">
    <text evidence="1">Activated by phosphorylation.</text>
</comment>
<comment type="similarity">
    <text evidence="1">Belongs to the phosphohexose mutase family.</text>
</comment>
<accession>A8FYS5</accession>
<feature type="chain" id="PRO_1000087779" description="Phosphoglucosamine mutase">
    <location>
        <begin position="1"/>
        <end position="443"/>
    </location>
</feature>
<feature type="active site" description="Phosphoserine intermediate" evidence="1">
    <location>
        <position position="100"/>
    </location>
</feature>
<feature type="binding site" description="via phosphate group" evidence="1">
    <location>
        <position position="100"/>
    </location>
    <ligand>
        <name>Mg(2+)</name>
        <dbReference type="ChEBI" id="CHEBI:18420"/>
    </ligand>
</feature>
<feature type="binding site" evidence="1">
    <location>
        <position position="239"/>
    </location>
    <ligand>
        <name>Mg(2+)</name>
        <dbReference type="ChEBI" id="CHEBI:18420"/>
    </ligand>
</feature>
<feature type="binding site" evidence="1">
    <location>
        <position position="241"/>
    </location>
    <ligand>
        <name>Mg(2+)</name>
        <dbReference type="ChEBI" id="CHEBI:18420"/>
    </ligand>
</feature>
<feature type="binding site" evidence="1">
    <location>
        <position position="243"/>
    </location>
    <ligand>
        <name>Mg(2+)</name>
        <dbReference type="ChEBI" id="CHEBI:18420"/>
    </ligand>
</feature>
<feature type="modified residue" description="Phosphoserine" evidence="1">
    <location>
        <position position="100"/>
    </location>
</feature>
<protein>
    <recommendedName>
        <fullName evidence="1">Phosphoglucosamine mutase</fullName>
        <ecNumber evidence="1">5.4.2.10</ecNumber>
    </recommendedName>
</protein>
<keyword id="KW-0413">Isomerase</keyword>
<keyword id="KW-0460">Magnesium</keyword>
<keyword id="KW-0479">Metal-binding</keyword>
<keyword id="KW-0597">Phosphoprotein</keyword>
<keyword id="KW-1185">Reference proteome</keyword>
<name>GLMM_SHESH</name>
<sequence>MRKFFGTDGIRGKVGAGKMTPELALKLGWAAGRVLSRSGTKKVIIGKDTRISGYLFESAMEAGLSAAGLNVMLMGPMPTPAVAYLTRTFRAEAGVVISASHNPYYDNGIKFFSNDGSKLDDEVELEIERELDKPLTCVESHLLGKVSRIDDAPGRYIEYCKGNFPAEHTLHGLKIVVDCAHGATYHIAPSVFRELGAEVIAIGDKPDGLNINHEVGATSMGKIRETVIGENADLGIALDGDGDRIMMVNRHGKVIDGDEILYILAYDAQSRGVLRGGVVGTLMSNLGLDLALQELDIPFDRSNVGDRYVMTMMKEKGWRIGGENSGHILNLDHGTTGDGIVAGILVLAAMRRRNATLEELTENIKMLPQVLVNVRFEGAHNPLESEQVLAAKSEVEALLGERGRVLLRKSGTEPLIRVMVEGDVEADVIKHANYIADAVRNLV</sequence>
<evidence type="ECO:0000255" key="1">
    <source>
        <dbReference type="HAMAP-Rule" id="MF_01554"/>
    </source>
</evidence>